<organism>
    <name type="scientific">Homo sapiens</name>
    <name type="common">Human</name>
    <dbReference type="NCBI Taxonomy" id="9606"/>
    <lineage>
        <taxon>Eukaryota</taxon>
        <taxon>Metazoa</taxon>
        <taxon>Chordata</taxon>
        <taxon>Craniata</taxon>
        <taxon>Vertebrata</taxon>
        <taxon>Euteleostomi</taxon>
        <taxon>Mammalia</taxon>
        <taxon>Eutheria</taxon>
        <taxon>Euarchontoglires</taxon>
        <taxon>Primates</taxon>
        <taxon>Haplorrhini</taxon>
        <taxon>Catarrhini</taxon>
        <taxon>Hominidae</taxon>
        <taxon>Homo</taxon>
    </lineage>
</organism>
<sequence length="435" mass="48368">MAAHLLPICALFLTLLDMAQGFRGPLLPNRPFTTVWNANTQWCLERHGVDVDVSVFDVVANPGQTFRGPDMTIFYSSQLGTYPYYTPTGEPVFGGLPQNASLIAHLARTFQDILAAIPAPDFSGLAVIDWEAWRPRWAFNWDTKDIYRQRSRALVQAQHPDWPAPQVEAVAQDQFQGAARAWMAGTLQLGRALRPRGLWGFYGFPDCYNYDFLSPNYTGQCPSGIRAQNDQLGWLWGQSRALYPSIYMPAVLEGTGKSQMYVQHRVAEAFRVAVAAGDPNLPVLPYVQIFYDTTNHFLPLDELEHSLGESAAQGAAGVVLWVSWENTRTKESCQAIKEYMDTTLGPFILNVTSGALLCSQALCSGHGRCVRRTSHPKALLLLNPASFSIQLTPGGGPLSLRGALSLEDQAQMAVEFKCRCYPGWQAPWCERKSMW</sequence>
<comment type="function">
    <text evidence="3">May have a role in promoting tumor progression. May block the TGFB1-enhanced cell growth.</text>
</comment>
<comment type="catalytic activity">
    <reaction>
        <text>Random hydrolysis of (1-&gt;4)-linkages between N-acetyl-beta-D-glucosamine and D-glucuronate residues in hyaluronate.</text>
        <dbReference type="EC" id="3.2.1.35"/>
    </reaction>
</comment>
<comment type="biophysicochemical properties">
    <phDependence>
        <text>Optimum pH is about 3.8.</text>
    </phDependence>
</comment>
<comment type="subcellular location">
    <subcellularLocation>
        <location evidence="5">Secreted</location>
    </subcellularLocation>
    <subcellularLocation>
        <location evidence="5">Lysosome</location>
    </subcellularLocation>
</comment>
<comment type="alternative products">
    <event type="alternative splicing"/>
    <isoform>
        <id>Q12794-1</id>
        <name>1</name>
        <sequence type="displayed"/>
    </isoform>
    <isoform>
        <id>Q12794-2</id>
        <name>2</name>
        <name>HYAl1v1</name>
        <sequence type="described" ref="VSP_015920"/>
    </isoform>
    <isoform>
        <id>Q12794-3</id>
        <name>3</name>
        <name>HYAl1v2</name>
        <sequence type="described" ref="VSP_015917"/>
    </isoform>
    <isoform>
        <id>Q12794-4</id>
        <name>4</name>
        <name>HYAl1v3</name>
        <sequence type="described" ref="VSP_015918 VSP_015919"/>
    </isoform>
    <isoform>
        <id>Q12794-5</id>
        <name>5</name>
        <name>HYAl1v4</name>
        <sequence type="described" ref="VSP_015916"/>
    </isoform>
    <isoform>
        <id>Q12794-6</id>
        <name>6</name>
        <name>HYAl1v5</name>
        <sequence type="described" ref="VSP_015915"/>
    </isoform>
    <isoform>
        <id>Q12794-7</id>
        <name>7</name>
        <sequence type="described" ref="VSP_015921 VSP_015922"/>
    </isoform>
</comment>
<comment type="tissue specificity">
    <text evidence="2 3 5">Highly expressed in the liver, kidney and heart. Weakly expressed in lung, placenta and skeletal muscle. No expression detected in adult brain. Isoform 1 is expressed only in bladder and prostate cancer cells, G2/G3 bladder tumor tissues and lymph node specimens showing tumor invasive tumors cells. Isoform 3, isoform 4, isoform 5 and isoform 6 are expressed in normal bladder and bladder tumor tissues.</text>
</comment>
<comment type="disease" evidence="2">
    <disease id="DI-00782">
        <name>Mucopolysaccharidosis 9</name>
        <acronym>MPS9</acronym>
        <description>A form of mucopolysaccharidosis, a group of lysosomal storage diseases characterized by defective degradation of glycosaminoglycans, resulting in their excessive accumulation and secretion. The diseases are progressive and often display a wide spectrum of clinical severity. MPS9 is an autosomal recessive form characterized by high hyaluronan concentration in the serum. Clinical features include periarticular soft tissue masses, mild short stature and acetabular erosions, and absence of neurological or visceral involvement.</description>
        <dbReference type="MIM" id="601492"/>
    </disease>
    <text>The disease is caused by variants affecting the gene represented in this entry.</text>
</comment>
<comment type="miscellaneous">
    <molecule>Isoform 2</molecule>
    <text evidence="9">Enzymatically inactive.</text>
</comment>
<comment type="miscellaneous">
    <molecule>Isoform 3</molecule>
    <text evidence="9">Enzymatically inactive.</text>
</comment>
<comment type="miscellaneous">
    <molecule>Isoform 4</molecule>
    <text evidence="9">Enzymatically inactive.</text>
</comment>
<comment type="miscellaneous">
    <molecule>Isoform 5</molecule>
    <text evidence="9">Enzymatically inactive.</text>
</comment>
<comment type="miscellaneous">
    <molecule>Isoform 6</molecule>
    <text evidence="9">Enzymatically inactive.</text>
</comment>
<comment type="similarity">
    <text evidence="9">Belongs to the glycosyl hydrolase 56 family.</text>
</comment>
<comment type="sequence caution" evidence="9">
    <conflict type="erroneous initiation">
        <sequence resource="EMBL-CDS" id="AAH25774"/>
    </conflict>
</comment>
<comment type="online information" name="Atlas of Genetics and Cytogenetics in Oncology and Haematology">
    <link uri="https://atlasgeneticsoncology.org/gene/40903/HYAL1"/>
</comment>
<name>HYAL1_HUMAN</name>
<evidence type="ECO:0000255" key="1"/>
<evidence type="ECO:0000269" key="2">
    <source>
    </source>
</evidence>
<evidence type="ECO:0000269" key="3">
    <source>
    </source>
</evidence>
<evidence type="ECO:0000269" key="4">
    <source>
    </source>
</evidence>
<evidence type="ECO:0000269" key="5">
    <source>
    </source>
</evidence>
<evidence type="ECO:0000303" key="6">
    <source>
    </source>
</evidence>
<evidence type="ECO:0000303" key="7">
    <source>
    </source>
</evidence>
<evidence type="ECO:0000303" key="8">
    <source ref="6"/>
</evidence>
<evidence type="ECO:0000305" key="9"/>
<evidence type="ECO:0007829" key="10">
    <source>
        <dbReference type="PDB" id="2PE4"/>
    </source>
</evidence>
<feature type="signal peptide" evidence="1">
    <location>
        <begin position="1"/>
        <end position="21"/>
    </location>
</feature>
<feature type="chain" id="PRO_0000042622" description="Hyaluronidase-1">
    <location>
        <begin position="22"/>
        <end position="435"/>
    </location>
</feature>
<feature type="domain" description="EGF-like">
    <location>
        <begin position="354"/>
        <end position="430"/>
    </location>
</feature>
<feature type="active site" description="Proton donor" evidence="9">
    <location>
        <position position="131"/>
    </location>
</feature>
<feature type="glycosylation site" description="N-linked (GlcNAc...) asparagine" evidence="4">
    <location>
        <position position="99"/>
    </location>
</feature>
<feature type="glycosylation site" description="N-linked (GlcNAc...) asparagine" evidence="4">
    <location>
        <position position="216"/>
    </location>
</feature>
<feature type="glycosylation site" description="N-linked (GlcNAc...) asparagine" evidence="4">
    <location>
        <position position="350"/>
    </location>
</feature>
<feature type="disulfide bond" evidence="4">
    <location>
        <begin position="43"/>
        <end position="333"/>
    </location>
</feature>
<feature type="disulfide bond" evidence="4">
    <location>
        <begin position="207"/>
        <end position="221"/>
    </location>
</feature>
<feature type="disulfide bond" evidence="4">
    <location>
        <begin position="358"/>
        <end position="369"/>
    </location>
</feature>
<feature type="disulfide bond" evidence="4">
    <location>
        <begin position="363"/>
        <end position="418"/>
    </location>
</feature>
<feature type="disulfide bond" evidence="4">
    <location>
        <begin position="420"/>
        <end position="429"/>
    </location>
</feature>
<feature type="splice variant" id="VSP_015915" description="In isoform 6." evidence="6">
    <location>
        <begin position="1"/>
        <end position="339"/>
    </location>
</feature>
<feature type="splice variant" id="VSP_015916" description="In isoform 5." evidence="6">
    <location>
        <begin position="1"/>
        <end position="259"/>
    </location>
</feature>
<feature type="splice variant" id="VSP_015917" description="In isoform 3." evidence="6">
    <location>
        <begin position="1"/>
        <end position="182"/>
    </location>
</feature>
<feature type="splice variant" id="VSP_015918" description="In isoform 4." evidence="6">
    <original>YN</original>
    <variation>SG</variation>
    <location>
        <begin position="208"/>
        <end position="209"/>
    </location>
</feature>
<feature type="splice variant" id="VSP_015919" description="In isoform 4." evidence="6">
    <location>
        <begin position="210"/>
        <end position="435"/>
    </location>
</feature>
<feature type="splice variant" id="VSP_015920" description="In isoform 2." evidence="6 8">
    <location>
        <begin position="301"/>
        <end position="330"/>
    </location>
</feature>
<feature type="splice variant" id="VSP_015921" description="In isoform 7." evidence="7">
    <original>ESCQAI</original>
    <variation>VSLGLA</variation>
    <location>
        <begin position="331"/>
        <end position="336"/>
    </location>
</feature>
<feature type="splice variant" id="VSP_015922" description="In isoform 7." evidence="7">
    <location>
        <begin position="337"/>
        <end position="435"/>
    </location>
</feature>
<feature type="sequence variant" id="VAR_023643" description="In MPS9; dbSNP:rs104893743." evidence="2">
    <original>E</original>
    <variation>K</variation>
    <location>
        <position position="268"/>
    </location>
</feature>
<feature type="sequence conflict" description="In Ref. 6; CAG46731." evidence="9" ref="6">
    <original>A</original>
    <variation>G</variation>
    <location>
        <position position="3"/>
    </location>
</feature>
<feature type="sequence conflict" description="In Ref. 1; AAD53277." evidence="9" ref="1">
    <original>R</original>
    <variation>G</variation>
    <location>
        <position position="191"/>
    </location>
</feature>
<feature type="sequence conflict" description="In Ref. 3; AAD24460." evidence="9" ref="3">
    <original>L</original>
    <variation>Q</variation>
    <location>
        <position position="300"/>
    </location>
</feature>
<feature type="strand" evidence="10">
    <location>
        <begin position="24"/>
        <end position="27"/>
    </location>
</feature>
<feature type="strand" evidence="10">
    <location>
        <begin position="30"/>
        <end position="38"/>
    </location>
</feature>
<feature type="helix" evidence="10">
    <location>
        <begin position="40"/>
        <end position="47"/>
    </location>
</feature>
<feature type="strand" evidence="10">
    <location>
        <begin position="56"/>
        <end position="59"/>
    </location>
</feature>
<feature type="strand" evidence="10">
    <location>
        <begin position="69"/>
        <end position="74"/>
    </location>
</feature>
<feature type="strand" evidence="10">
    <location>
        <begin position="78"/>
        <end position="80"/>
    </location>
</feature>
<feature type="helix" evidence="10">
    <location>
        <begin position="97"/>
        <end position="99"/>
    </location>
</feature>
<feature type="helix" evidence="10">
    <location>
        <begin position="102"/>
        <end position="116"/>
    </location>
</feature>
<feature type="strand" evidence="10">
    <location>
        <begin position="124"/>
        <end position="128"/>
    </location>
</feature>
<feature type="helix" evidence="10">
    <location>
        <begin position="137"/>
        <end position="139"/>
    </location>
</feature>
<feature type="helix" evidence="10">
    <location>
        <begin position="142"/>
        <end position="144"/>
    </location>
</feature>
<feature type="helix" evidence="10">
    <location>
        <begin position="145"/>
        <end position="158"/>
    </location>
</feature>
<feature type="strand" evidence="10">
    <location>
        <begin position="159"/>
        <end position="161"/>
    </location>
</feature>
<feature type="helix" evidence="10">
    <location>
        <begin position="164"/>
        <end position="193"/>
    </location>
</feature>
<feature type="strand" evidence="10">
    <location>
        <begin position="197"/>
        <end position="202"/>
    </location>
</feature>
<feature type="helix" evidence="10">
    <location>
        <begin position="223"/>
        <end position="230"/>
    </location>
</feature>
<feature type="helix" evidence="10">
    <location>
        <begin position="233"/>
        <end position="238"/>
    </location>
</feature>
<feature type="strand" evidence="10">
    <location>
        <begin position="240"/>
        <end position="243"/>
    </location>
</feature>
<feature type="helix" evidence="10">
    <location>
        <begin position="250"/>
        <end position="252"/>
    </location>
</feature>
<feature type="helix" evidence="10">
    <location>
        <begin position="258"/>
        <end position="275"/>
    </location>
</feature>
<feature type="helix" evidence="10">
    <location>
        <begin position="300"/>
        <end position="304"/>
    </location>
</feature>
<feature type="helix" evidence="10">
    <location>
        <begin position="307"/>
        <end position="312"/>
    </location>
</feature>
<feature type="strand" evidence="10">
    <location>
        <begin position="316"/>
        <end position="321"/>
    </location>
</feature>
<feature type="helix" evidence="10">
    <location>
        <begin position="324"/>
        <end position="326"/>
    </location>
</feature>
<feature type="strand" evidence="10">
    <location>
        <begin position="327"/>
        <end position="329"/>
    </location>
</feature>
<feature type="helix" evidence="10">
    <location>
        <begin position="330"/>
        <end position="342"/>
    </location>
</feature>
<feature type="helix" evidence="10">
    <location>
        <begin position="344"/>
        <end position="362"/>
    </location>
</feature>
<feature type="strand" evidence="10">
    <location>
        <begin position="366"/>
        <end position="371"/>
    </location>
</feature>
<feature type="turn" evidence="10">
    <location>
        <begin position="384"/>
        <end position="386"/>
    </location>
</feature>
<feature type="strand" evidence="10">
    <location>
        <begin position="387"/>
        <end position="391"/>
    </location>
</feature>
<feature type="helix" evidence="10">
    <location>
        <begin position="393"/>
        <end position="395"/>
    </location>
</feature>
<feature type="strand" evidence="10">
    <location>
        <begin position="398"/>
        <end position="402"/>
    </location>
</feature>
<feature type="helix" evidence="10">
    <location>
        <begin position="406"/>
        <end position="415"/>
    </location>
</feature>
<feature type="strand" evidence="10">
    <location>
        <begin position="416"/>
        <end position="420"/>
    </location>
</feature>
<feature type="turn" evidence="10">
    <location>
        <begin position="426"/>
        <end position="429"/>
    </location>
</feature>
<dbReference type="EC" id="3.2.1.35"/>
<dbReference type="EMBL" id="U03056">
    <property type="protein sequence ID" value="AAD09137.2"/>
    <property type="molecule type" value="mRNA"/>
</dbReference>
<dbReference type="EMBL" id="U96078">
    <property type="protein sequence ID" value="AAD04190.1"/>
    <property type="molecule type" value="mRNA"/>
</dbReference>
<dbReference type="EMBL" id="AF118821">
    <property type="protein sequence ID" value="AAD24460.1"/>
    <property type="molecule type" value="mRNA"/>
</dbReference>
<dbReference type="EMBL" id="AF502904">
    <property type="protein sequence ID" value="AAM60770.1"/>
    <property type="molecule type" value="mRNA"/>
</dbReference>
<dbReference type="EMBL" id="AF502905">
    <property type="protein sequence ID" value="AAM60771.1"/>
    <property type="molecule type" value="mRNA"/>
</dbReference>
<dbReference type="EMBL" id="AF502906">
    <property type="protein sequence ID" value="AAM60772.1"/>
    <property type="molecule type" value="mRNA"/>
</dbReference>
<dbReference type="EMBL" id="AF502907">
    <property type="protein sequence ID" value="AAM60773.1"/>
    <property type="molecule type" value="mRNA"/>
</dbReference>
<dbReference type="EMBL" id="AF502908">
    <property type="protein sequence ID" value="AAM60774.1"/>
    <property type="molecule type" value="mRNA"/>
</dbReference>
<dbReference type="EMBL" id="AF173154">
    <property type="protein sequence ID" value="AAD53277.1"/>
    <property type="molecule type" value="mRNA"/>
</dbReference>
<dbReference type="EMBL" id="CR541933">
    <property type="protein sequence ID" value="CAG46731.1"/>
    <property type="molecule type" value="mRNA"/>
</dbReference>
<dbReference type="EMBL" id="AC002455">
    <property type="protein sequence ID" value="AAB67046.1"/>
    <property type="molecule type" value="Genomic_DNA"/>
</dbReference>
<dbReference type="EMBL" id="U73167">
    <property type="protein sequence ID" value="AAC02730.1"/>
    <property type="molecule type" value="Genomic_DNA"/>
</dbReference>
<dbReference type="EMBL" id="BC025774">
    <property type="protein sequence ID" value="AAH25774.1"/>
    <property type="status" value="ALT_INIT"/>
    <property type="molecule type" value="mRNA"/>
</dbReference>
<dbReference type="EMBL" id="BC035695">
    <property type="protein sequence ID" value="AAH35695.1"/>
    <property type="molecule type" value="mRNA"/>
</dbReference>
<dbReference type="CCDS" id="CCDS2816.1">
    <molecule id="Q12794-1"/>
</dbReference>
<dbReference type="CCDS" id="CCDS2817.1">
    <molecule id="Q12794-2"/>
</dbReference>
<dbReference type="CCDS" id="CCDS46832.1">
    <molecule id="Q12794-3"/>
</dbReference>
<dbReference type="CCDS" id="CCDS46833.1">
    <molecule id="Q12794-5"/>
</dbReference>
<dbReference type="PIR" id="JC5584">
    <property type="entry name" value="JC5584"/>
</dbReference>
<dbReference type="RefSeq" id="NP_149349.2">
    <molecule id="Q12794-1"/>
    <property type="nucleotide sequence ID" value="NM_033159.3"/>
</dbReference>
<dbReference type="RefSeq" id="NP_695013.1">
    <molecule id="Q12794-1"/>
    <property type="nucleotide sequence ID" value="NM_153281.2"/>
</dbReference>
<dbReference type="RefSeq" id="NP_695014.1">
    <molecule id="Q12794-2"/>
    <property type="nucleotide sequence ID" value="NM_153282.3"/>
</dbReference>
<dbReference type="RefSeq" id="NP_695015.1">
    <molecule id="Q12794-3"/>
    <property type="nucleotide sequence ID" value="NM_153283.3"/>
</dbReference>
<dbReference type="RefSeq" id="NP_695017.1">
    <molecule id="Q12794-5"/>
    <property type="nucleotide sequence ID" value="NM_153285.3"/>
</dbReference>
<dbReference type="RefSeq" id="XP_011531969.1">
    <property type="nucleotide sequence ID" value="XM_011533667.2"/>
</dbReference>
<dbReference type="RefSeq" id="XP_011531970.1">
    <molecule id="Q12794-1"/>
    <property type="nucleotide sequence ID" value="XM_011533668.3"/>
</dbReference>
<dbReference type="RefSeq" id="XP_011531971.1">
    <property type="nucleotide sequence ID" value="XM_011533669.2"/>
</dbReference>
<dbReference type="RefSeq" id="XP_054202389.1">
    <molecule id="Q12794-1"/>
    <property type="nucleotide sequence ID" value="XM_054346414.1"/>
</dbReference>
<dbReference type="PDB" id="2PE4">
    <property type="method" value="X-ray"/>
    <property type="resolution" value="2.00 A"/>
    <property type="chains" value="A=22-435"/>
</dbReference>
<dbReference type="PDBsum" id="2PE4"/>
<dbReference type="SMR" id="Q12794"/>
<dbReference type="BioGRID" id="109603">
    <property type="interactions" value="35"/>
</dbReference>
<dbReference type="FunCoup" id="Q12794">
    <property type="interactions" value="170"/>
</dbReference>
<dbReference type="IntAct" id="Q12794">
    <property type="interactions" value="28"/>
</dbReference>
<dbReference type="STRING" id="9606.ENSP00000266031"/>
<dbReference type="BindingDB" id="Q12794"/>
<dbReference type="ChEMBL" id="CHEMBL4528"/>
<dbReference type="DrugBank" id="DB08818">
    <property type="generic name" value="Hyaluronic acid"/>
</dbReference>
<dbReference type="CAZy" id="GH56">
    <property type="family name" value="Glycoside Hydrolase Family 56"/>
</dbReference>
<dbReference type="GlyCosmos" id="Q12794">
    <property type="glycosylation" value="3 sites, No reported glycans"/>
</dbReference>
<dbReference type="GlyGen" id="Q12794">
    <property type="glycosylation" value="6 sites, 2 N-linked glycans (1 site), 1 O-linked glycan (1 site)"/>
</dbReference>
<dbReference type="iPTMnet" id="Q12794"/>
<dbReference type="PhosphoSitePlus" id="Q12794"/>
<dbReference type="BioMuta" id="HYAL1"/>
<dbReference type="DMDM" id="74735617"/>
<dbReference type="jPOST" id="Q12794"/>
<dbReference type="MassIVE" id="Q12794"/>
<dbReference type="PaxDb" id="9606-ENSP00000266031"/>
<dbReference type="PeptideAtlas" id="Q12794"/>
<dbReference type="ProteomicsDB" id="58936">
    <molecule id="Q12794-1"/>
</dbReference>
<dbReference type="ProteomicsDB" id="58937">
    <molecule id="Q12794-2"/>
</dbReference>
<dbReference type="ProteomicsDB" id="58938">
    <molecule id="Q12794-3"/>
</dbReference>
<dbReference type="ProteomicsDB" id="58939">
    <molecule id="Q12794-4"/>
</dbReference>
<dbReference type="ProteomicsDB" id="58940">
    <molecule id="Q12794-5"/>
</dbReference>
<dbReference type="ProteomicsDB" id="58941">
    <molecule id="Q12794-6"/>
</dbReference>
<dbReference type="ProteomicsDB" id="58942">
    <molecule id="Q12794-7"/>
</dbReference>
<dbReference type="Antibodypedia" id="1046">
    <property type="antibodies" value="288 antibodies from 30 providers"/>
</dbReference>
<dbReference type="DNASU" id="3373"/>
<dbReference type="Ensembl" id="ENST00000266031.8">
    <molecule id="Q12794-1"/>
    <property type="protein sequence ID" value="ENSP00000266031.4"/>
    <property type="gene ID" value="ENSG00000114378.17"/>
</dbReference>
<dbReference type="Ensembl" id="ENST00000320295.12">
    <molecule id="Q12794-1"/>
    <property type="protein sequence ID" value="ENSP00000346068.5"/>
    <property type="gene ID" value="ENSG00000114378.17"/>
</dbReference>
<dbReference type="Ensembl" id="ENST00000395143.6">
    <molecule id="Q12794-2"/>
    <property type="protein sequence ID" value="ENSP00000378575.2"/>
    <property type="gene ID" value="ENSG00000114378.17"/>
</dbReference>
<dbReference type="Ensembl" id="ENST00000395144.7">
    <molecule id="Q12794-1"/>
    <property type="protein sequence ID" value="ENSP00000378576.2"/>
    <property type="gene ID" value="ENSG00000114378.17"/>
</dbReference>
<dbReference type="Ensembl" id="ENST00000447605.2">
    <molecule id="Q12794-5"/>
    <property type="protein sequence ID" value="ENSP00000390149.2"/>
    <property type="gene ID" value="ENSG00000114378.17"/>
</dbReference>
<dbReference type="Ensembl" id="ENST00000457214.6">
    <molecule id="Q12794-3"/>
    <property type="protein sequence ID" value="ENSP00000393358.2"/>
    <property type="gene ID" value="ENSG00000114378.17"/>
</dbReference>
<dbReference type="Ensembl" id="ENST00000618175.4">
    <molecule id="Q12794-1"/>
    <property type="protein sequence ID" value="ENSP00000477903.1"/>
    <property type="gene ID" value="ENSG00000114378.17"/>
</dbReference>
<dbReference type="GeneID" id="3373"/>
<dbReference type="KEGG" id="hsa:3373"/>
<dbReference type="MANE-Select" id="ENST00000395144.7">
    <property type="protein sequence ID" value="ENSP00000378576.2"/>
    <property type="RefSeq nucleotide sequence ID" value="NM_033159.4"/>
    <property type="RefSeq protein sequence ID" value="NP_149349.2"/>
</dbReference>
<dbReference type="UCSC" id="uc003czm.5">
    <molecule id="Q12794-1"/>
    <property type="organism name" value="human"/>
</dbReference>
<dbReference type="AGR" id="HGNC:5320"/>
<dbReference type="CTD" id="3373"/>
<dbReference type="DisGeNET" id="3373"/>
<dbReference type="GeneCards" id="HYAL1"/>
<dbReference type="HGNC" id="HGNC:5320">
    <property type="gene designation" value="HYAL1"/>
</dbReference>
<dbReference type="HPA" id="ENSG00000114378">
    <property type="expression patterns" value="Tissue enhanced (liver, lymphoid tissue)"/>
</dbReference>
<dbReference type="MalaCards" id="HYAL1"/>
<dbReference type="MIM" id="601492">
    <property type="type" value="phenotype"/>
</dbReference>
<dbReference type="MIM" id="607071">
    <property type="type" value="gene"/>
</dbReference>
<dbReference type="neXtProt" id="NX_Q12794"/>
<dbReference type="OpenTargets" id="ENSG00000114378"/>
<dbReference type="Orphanet" id="67041">
    <property type="disease" value="Hyaluronidase deficiency"/>
</dbReference>
<dbReference type="PharmGKB" id="PA29571"/>
<dbReference type="VEuPathDB" id="HostDB:ENSG00000114378"/>
<dbReference type="eggNOG" id="ENOG502QTUU">
    <property type="taxonomic scope" value="Eukaryota"/>
</dbReference>
<dbReference type="GeneTree" id="ENSGT01020000230364"/>
<dbReference type="HOGENOM" id="CLU_036366_0_0_1"/>
<dbReference type="InParanoid" id="Q12794"/>
<dbReference type="OMA" id="WVRNWDS"/>
<dbReference type="OrthoDB" id="5796153at2759"/>
<dbReference type="PAN-GO" id="Q12794">
    <property type="GO annotations" value="2 GO annotations based on evolutionary models"/>
</dbReference>
<dbReference type="PhylomeDB" id="Q12794"/>
<dbReference type="TreeFam" id="TF321598"/>
<dbReference type="BioCyc" id="MetaCyc:HS03763-MONOMER"/>
<dbReference type="BRENDA" id="3.2.1.35">
    <property type="organism ID" value="2681"/>
</dbReference>
<dbReference type="BRENDA" id="4.2.2.1">
    <property type="organism ID" value="2681"/>
</dbReference>
<dbReference type="PathwayCommons" id="Q12794"/>
<dbReference type="Reactome" id="R-HSA-2024101">
    <property type="pathway name" value="CS/DS degradation"/>
</dbReference>
<dbReference type="Reactome" id="R-HSA-2160916">
    <property type="pathway name" value="Hyaluronan uptake and degradation"/>
</dbReference>
<dbReference type="Reactome" id="R-HSA-2206280">
    <property type="pathway name" value="MPS IX - Natowicz syndrome"/>
</dbReference>
<dbReference type="SignaLink" id="Q12794"/>
<dbReference type="SIGNOR" id="Q12794"/>
<dbReference type="BioGRID-ORCS" id="3373">
    <property type="hits" value="9 hits in 1157 CRISPR screens"/>
</dbReference>
<dbReference type="EvolutionaryTrace" id="Q12794"/>
<dbReference type="GeneWiki" id="HYAL1"/>
<dbReference type="GenomeRNAi" id="3373"/>
<dbReference type="Pharos" id="Q12794">
    <property type="development level" value="Tbio"/>
</dbReference>
<dbReference type="PRO" id="PR:Q12794"/>
<dbReference type="Proteomes" id="UP000005640">
    <property type="component" value="Chromosome 3"/>
</dbReference>
<dbReference type="RNAct" id="Q12794">
    <property type="molecule type" value="protein"/>
</dbReference>
<dbReference type="Bgee" id="ENSG00000114378">
    <property type="expression patterns" value="Expressed in right lobe of liver and 103 other cell types or tissues"/>
</dbReference>
<dbReference type="ExpressionAtlas" id="Q12794">
    <property type="expression patterns" value="baseline and differential"/>
</dbReference>
<dbReference type="GO" id="GO:0031410">
    <property type="term" value="C:cytoplasmic vesicle"/>
    <property type="evidence" value="ECO:0000314"/>
    <property type="project" value="UniProtKB"/>
</dbReference>
<dbReference type="GO" id="GO:0070062">
    <property type="term" value="C:extracellular exosome"/>
    <property type="evidence" value="ECO:0007005"/>
    <property type="project" value="UniProtKB"/>
</dbReference>
<dbReference type="GO" id="GO:0005615">
    <property type="term" value="C:extracellular space"/>
    <property type="evidence" value="ECO:0000314"/>
    <property type="project" value="UniProtKB"/>
</dbReference>
<dbReference type="GO" id="GO:0036117">
    <property type="term" value="C:hyaluranon cable"/>
    <property type="evidence" value="ECO:0000314"/>
    <property type="project" value="UniProtKB"/>
</dbReference>
<dbReference type="GO" id="GO:0043202">
    <property type="term" value="C:lysosomal lumen"/>
    <property type="evidence" value="ECO:0000304"/>
    <property type="project" value="Reactome"/>
</dbReference>
<dbReference type="GO" id="GO:0005764">
    <property type="term" value="C:lysosome"/>
    <property type="evidence" value="ECO:0000314"/>
    <property type="project" value="UniProtKB"/>
</dbReference>
<dbReference type="GO" id="GO:0052757">
    <property type="term" value="F:chondroitin hydrolase activity"/>
    <property type="evidence" value="ECO:0007669"/>
    <property type="project" value="Ensembl"/>
</dbReference>
<dbReference type="GO" id="GO:0004415">
    <property type="term" value="F:hyalurononglucosaminidase activity"/>
    <property type="evidence" value="ECO:0000314"/>
    <property type="project" value="UniProtKB"/>
</dbReference>
<dbReference type="GO" id="GO:0005975">
    <property type="term" value="P:carbohydrate metabolic process"/>
    <property type="evidence" value="ECO:0007669"/>
    <property type="project" value="InterPro"/>
</dbReference>
<dbReference type="GO" id="GO:0051216">
    <property type="term" value="P:cartilage development"/>
    <property type="evidence" value="ECO:0000270"/>
    <property type="project" value="UniProtKB"/>
</dbReference>
<dbReference type="GO" id="GO:0044344">
    <property type="term" value="P:cellular response to fibroblast growth factor stimulus"/>
    <property type="evidence" value="ECO:0000314"/>
    <property type="project" value="UniProtKB"/>
</dbReference>
<dbReference type="GO" id="GO:0071347">
    <property type="term" value="P:cellular response to interleukin-1"/>
    <property type="evidence" value="ECO:0000314"/>
    <property type="project" value="UniProtKB"/>
</dbReference>
<dbReference type="GO" id="GO:0071467">
    <property type="term" value="P:cellular response to pH"/>
    <property type="evidence" value="ECO:0000314"/>
    <property type="project" value="UniProtKB"/>
</dbReference>
<dbReference type="GO" id="GO:0036120">
    <property type="term" value="P:cellular response to platelet-derived growth factor stimulus"/>
    <property type="evidence" value="ECO:0000314"/>
    <property type="project" value="UniProtKB"/>
</dbReference>
<dbReference type="GO" id="GO:0071356">
    <property type="term" value="P:cellular response to tumor necrosis factor"/>
    <property type="evidence" value="ECO:0000270"/>
    <property type="project" value="UniProtKB"/>
</dbReference>
<dbReference type="GO" id="GO:0071493">
    <property type="term" value="P:cellular response to UV-B"/>
    <property type="evidence" value="ECO:0000314"/>
    <property type="project" value="UniProtKB"/>
</dbReference>
<dbReference type="GO" id="GO:0030207">
    <property type="term" value="P:chondroitin sulfate proteoglycan catabolic process"/>
    <property type="evidence" value="ECO:0007669"/>
    <property type="project" value="Ensembl"/>
</dbReference>
<dbReference type="GO" id="GO:0060272">
    <property type="term" value="P:embryonic skeletal joint morphogenesis"/>
    <property type="evidence" value="ECO:0007669"/>
    <property type="project" value="Ensembl"/>
</dbReference>
<dbReference type="GO" id="GO:0006027">
    <property type="term" value="P:glycosaminoglycan catabolic process"/>
    <property type="evidence" value="ECO:0000304"/>
    <property type="project" value="Reactome"/>
</dbReference>
<dbReference type="GO" id="GO:0030214">
    <property type="term" value="P:hyaluronan catabolic process"/>
    <property type="evidence" value="ECO:0000314"/>
    <property type="project" value="UniProtKB"/>
</dbReference>
<dbReference type="GO" id="GO:0030212">
    <property type="term" value="P:hyaluronan metabolic process"/>
    <property type="evidence" value="ECO:0000314"/>
    <property type="project" value="UniProtKB"/>
</dbReference>
<dbReference type="GO" id="GO:0006954">
    <property type="term" value="P:inflammatory response"/>
    <property type="evidence" value="ECO:0000314"/>
    <property type="project" value="UniProtKB"/>
</dbReference>
<dbReference type="GO" id="GO:0030308">
    <property type="term" value="P:negative regulation of cell growth"/>
    <property type="evidence" value="ECO:0000314"/>
    <property type="project" value="UniProtKB"/>
</dbReference>
<dbReference type="GO" id="GO:0045766">
    <property type="term" value="P:positive regulation of angiogenesis"/>
    <property type="evidence" value="ECO:0000315"/>
    <property type="project" value="UniProtKB"/>
</dbReference>
<dbReference type="GO" id="GO:0045785">
    <property type="term" value="P:positive regulation of cell adhesion"/>
    <property type="evidence" value="ECO:0000315"/>
    <property type="project" value="UniProtKB"/>
</dbReference>
<dbReference type="GO" id="GO:0030307">
    <property type="term" value="P:positive regulation of cell growth"/>
    <property type="evidence" value="ECO:0000315"/>
    <property type="project" value="UniProtKB"/>
</dbReference>
<dbReference type="GO" id="GO:1900106">
    <property type="term" value="P:positive regulation of hyaluranon cable assembly"/>
    <property type="evidence" value="ECO:0000314"/>
    <property type="project" value="UniProtKB"/>
</dbReference>
<dbReference type="GO" id="GO:0046677">
    <property type="term" value="P:response to antibiotic"/>
    <property type="evidence" value="ECO:0000314"/>
    <property type="project" value="UniProtKB"/>
</dbReference>
<dbReference type="GO" id="GO:0000302">
    <property type="term" value="P:response to reactive oxygen species"/>
    <property type="evidence" value="ECO:0000314"/>
    <property type="project" value="UniProtKB"/>
</dbReference>
<dbReference type="GO" id="GO:0009615">
    <property type="term" value="P:response to virus"/>
    <property type="evidence" value="ECO:0000314"/>
    <property type="project" value="UniProtKB"/>
</dbReference>
<dbReference type="FunFam" id="3.20.20.70:FF:000065">
    <property type="entry name" value="Hyaluronidase"/>
    <property type="match status" value="1"/>
</dbReference>
<dbReference type="Gene3D" id="3.20.20.70">
    <property type="entry name" value="Aldolase class I"/>
    <property type="match status" value="1"/>
</dbReference>
<dbReference type="InterPro" id="IPR013785">
    <property type="entry name" value="Aldolase_TIM"/>
</dbReference>
<dbReference type="InterPro" id="IPR017853">
    <property type="entry name" value="Glycoside_hydrolase_SF"/>
</dbReference>
<dbReference type="InterPro" id="IPR018155">
    <property type="entry name" value="Hyaluronidase"/>
</dbReference>
<dbReference type="PANTHER" id="PTHR11769">
    <property type="entry name" value="HYALURONIDASE"/>
    <property type="match status" value="1"/>
</dbReference>
<dbReference type="PANTHER" id="PTHR11769:SF23">
    <property type="entry name" value="HYALURONIDASE-1"/>
    <property type="match status" value="1"/>
</dbReference>
<dbReference type="Pfam" id="PF01630">
    <property type="entry name" value="Glyco_hydro_56"/>
    <property type="match status" value="1"/>
</dbReference>
<dbReference type="PIRSF" id="PIRSF038193">
    <property type="entry name" value="Hyaluronidase"/>
    <property type="match status" value="1"/>
</dbReference>
<dbReference type="PRINTS" id="PR00846">
    <property type="entry name" value="GLHYDRLASE56"/>
</dbReference>
<dbReference type="SUPFAM" id="SSF51445">
    <property type="entry name" value="(Trans)glycosidases"/>
    <property type="match status" value="1"/>
</dbReference>
<dbReference type="PROSITE" id="PS01186">
    <property type="entry name" value="EGF_2"/>
    <property type="match status" value="1"/>
</dbReference>
<reference key="1">
    <citation type="journal article" date="1996" name="Cancer Res.">
        <title>Construction of a 600-kilobase cosmid clone contig and generation of a transcriptional map surrounding the lung cancer tumor suppressor gene (TSG) locus on human chromosome 3p21.3: progress toward the isolation of a lung cancer TSG.</title>
        <authorList>
            <person name="Wei M.H."/>
            <person name="Latif F."/>
            <person name="Bader S."/>
            <person name="Kashuba V."/>
            <person name="Chen J.Y."/>
            <person name="Duh F.-M."/>
            <person name="Sekido Y."/>
            <person name="Lee C.C."/>
            <person name="Geil L."/>
            <person name="Kuzmin I."/>
            <person name="Zabarovsky E."/>
            <person name="Klein G."/>
            <person name="Zbar B."/>
            <person name="Minna J.D."/>
            <person name="Lerman M.I."/>
        </authorList>
    </citation>
    <scope>NUCLEOTIDE SEQUENCE [MRNA] (ISOFORM 1)</scope>
    <source>
        <tissue>Heart</tissue>
        <tissue>Lung cancer</tissue>
    </source>
</reference>
<reference key="2">
    <citation type="journal article" date="1997" name="Biochem. Biophys. Res. Commun.">
        <title>Purification, cloning, and expression of human plasma hyaluronidase.</title>
        <authorList>
            <person name="Frost G.I."/>
            <person name="Csoka A.B."/>
            <person name="Wong T."/>
            <person name="Stern R."/>
        </authorList>
    </citation>
    <scope>NUCLEOTIDE SEQUENCE [MRNA] (ISOFORM 1)</scope>
    <scope>PROTEIN SEQUENCE OF 22-37; 72-84; 248-259 AND 261-273</scope>
    <scope>SUBCELLULAR LOCATION</scope>
    <scope>TISSUE SPECIFICITY</scope>
    <source>
        <tissue>Plasma</tissue>
    </source>
</reference>
<reference key="3">
    <citation type="journal article" date="2000" name="Oncogene">
        <title>HYAL1(LUCA-1), a candidate tumor suppressor gene on chromosome 3p21.3, is inactivated in head and neck squamous cell carcinomas by aberrant splicing of pre-mRNA.</title>
        <authorList>
            <person name="Frost G.I."/>
            <person name="Mohapatra G."/>
            <person name="Wong T.M."/>
            <person name="Csoka A.B."/>
            <person name="Gray J.W."/>
            <person name="Stern R."/>
        </authorList>
    </citation>
    <scope>NUCLEOTIDE SEQUENCE [MRNA] (ISOFORM 1)</scope>
</reference>
<reference key="4">
    <citation type="journal article" date="2002" name="J. Biol. Chem.">
        <title>Regulation of hyaluronidase activity by alternative mRNA splicing.</title>
        <authorList>
            <person name="Lokeshwar V.B."/>
            <person name="Schroeder G.L."/>
            <person name="Carey R.I."/>
            <person name="Soloway M.S."/>
            <person name="Iida N."/>
        </authorList>
    </citation>
    <scope>NUCLEOTIDE SEQUENCE [MRNA] (ISOFORMS 2; 3; 4; 5 AND 6)</scope>
    <scope>FUNCTION</scope>
    <scope>TISSUE SPECIFICITY</scope>
</reference>
<reference key="5">
    <citation type="submission" date="1999-07" db="EMBL/GenBank/DDBJ databases">
        <authorList>
            <person name="Forgacs E."/>
            <person name="Sekido Y."/>
            <person name="Bader S."/>
            <person name="Cundiff S."/>
            <person name="Compton L."/>
            <person name="Latif F."/>
            <person name="Lerman M.I."/>
            <person name="Minna J.D."/>
        </authorList>
    </citation>
    <scope>NUCLEOTIDE SEQUENCE [MRNA] (ISOFORM 1)</scope>
</reference>
<reference key="6">
    <citation type="submission" date="2004-06" db="EMBL/GenBank/DDBJ databases">
        <title>Cloning of human full open reading frames in Gateway(TM) system entry vector (pDONR201).</title>
        <authorList>
            <person name="Ebert L."/>
            <person name="Schick M."/>
            <person name="Neubert P."/>
            <person name="Schatten R."/>
            <person name="Henze S."/>
            <person name="Korn B."/>
        </authorList>
    </citation>
    <scope>NUCLEOTIDE SEQUENCE [LARGE SCALE MRNA] (ISOFORM 2)</scope>
</reference>
<reference key="7">
    <citation type="journal article" date="2006" name="Nature">
        <title>The DNA sequence, annotation and analysis of human chromosome 3.</title>
        <authorList>
            <person name="Muzny D.M."/>
            <person name="Scherer S.E."/>
            <person name="Kaul R."/>
            <person name="Wang J."/>
            <person name="Yu J."/>
            <person name="Sudbrak R."/>
            <person name="Buhay C.J."/>
            <person name="Chen R."/>
            <person name="Cree A."/>
            <person name="Ding Y."/>
            <person name="Dugan-Rocha S."/>
            <person name="Gill R."/>
            <person name="Gunaratne P."/>
            <person name="Harris R.A."/>
            <person name="Hawes A.C."/>
            <person name="Hernandez J."/>
            <person name="Hodgson A.V."/>
            <person name="Hume J."/>
            <person name="Jackson A."/>
            <person name="Khan Z.M."/>
            <person name="Kovar-Smith C."/>
            <person name="Lewis L.R."/>
            <person name="Lozado R.J."/>
            <person name="Metzker M.L."/>
            <person name="Milosavljevic A."/>
            <person name="Miner G.R."/>
            <person name="Morgan M.B."/>
            <person name="Nazareth L.V."/>
            <person name="Scott G."/>
            <person name="Sodergren E."/>
            <person name="Song X.-Z."/>
            <person name="Steffen D."/>
            <person name="Wei S."/>
            <person name="Wheeler D.A."/>
            <person name="Wright M.W."/>
            <person name="Worley K.C."/>
            <person name="Yuan Y."/>
            <person name="Zhang Z."/>
            <person name="Adams C.Q."/>
            <person name="Ansari-Lari M.A."/>
            <person name="Ayele M."/>
            <person name="Brown M.J."/>
            <person name="Chen G."/>
            <person name="Chen Z."/>
            <person name="Clendenning J."/>
            <person name="Clerc-Blankenburg K.P."/>
            <person name="Chen R."/>
            <person name="Chen Z."/>
            <person name="Davis C."/>
            <person name="Delgado O."/>
            <person name="Dinh H.H."/>
            <person name="Dong W."/>
            <person name="Draper H."/>
            <person name="Ernst S."/>
            <person name="Fu G."/>
            <person name="Gonzalez-Garay M.L."/>
            <person name="Garcia D.K."/>
            <person name="Gillett W."/>
            <person name="Gu J."/>
            <person name="Hao B."/>
            <person name="Haugen E."/>
            <person name="Havlak P."/>
            <person name="He X."/>
            <person name="Hennig S."/>
            <person name="Hu S."/>
            <person name="Huang W."/>
            <person name="Jackson L.R."/>
            <person name="Jacob L.S."/>
            <person name="Kelly S.H."/>
            <person name="Kube M."/>
            <person name="Levy R."/>
            <person name="Li Z."/>
            <person name="Liu B."/>
            <person name="Liu J."/>
            <person name="Liu W."/>
            <person name="Lu J."/>
            <person name="Maheshwari M."/>
            <person name="Nguyen B.-V."/>
            <person name="Okwuonu G.O."/>
            <person name="Palmeiri A."/>
            <person name="Pasternak S."/>
            <person name="Perez L.M."/>
            <person name="Phelps K.A."/>
            <person name="Plopper F.J."/>
            <person name="Qiang B."/>
            <person name="Raymond C."/>
            <person name="Rodriguez R."/>
            <person name="Saenphimmachak C."/>
            <person name="Santibanez J."/>
            <person name="Shen H."/>
            <person name="Shen Y."/>
            <person name="Subramanian S."/>
            <person name="Tabor P.E."/>
            <person name="Verduzco D."/>
            <person name="Waldron L."/>
            <person name="Wang J."/>
            <person name="Wang J."/>
            <person name="Wang Q."/>
            <person name="Williams G.A."/>
            <person name="Wong G.K.-S."/>
            <person name="Yao Z."/>
            <person name="Zhang J."/>
            <person name="Zhang X."/>
            <person name="Zhao G."/>
            <person name="Zhou J."/>
            <person name="Zhou Y."/>
            <person name="Nelson D."/>
            <person name="Lehrach H."/>
            <person name="Reinhardt R."/>
            <person name="Naylor S.L."/>
            <person name="Yang H."/>
            <person name="Olson M."/>
            <person name="Weinstock G."/>
            <person name="Gibbs R.A."/>
        </authorList>
    </citation>
    <scope>NUCLEOTIDE SEQUENCE [LARGE SCALE GENOMIC DNA]</scope>
</reference>
<reference key="8">
    <citation type="journal article" date="2004" name="Genome Res.">
        <title>The status, quality, and expansion of the NIH full-length cDNA project: the Mammalian Gene Collection (MGC).</title>
        <authorList>
            <consortium name="The MGC Project Team"/>
        </authorList>
    </citation>
    <scope>NUCLEOTIDE SEQUENCE [LARGE SCALE MRNA] (ISOFORMS 1 AND 7)</scope>
    <source>
        <tissue>Colon</tissue>
        <tissue>Pancreas</tissue>
    </source>
</reference>
<reference key="9">
    <citation type="journal article" date="2007" name="Biochemistry">
        <title>Structure of human hyaluronidase-1, a hyaluronan hydrolyzing enzyme involved in tumor growth and angiogenesis.</title>
        <authorList>
            <person name="Chao K.L."/>
            <person name="Muthukumar L."/>
            <person name="Herzberg O."/>
        </authorList>
    </citation>
    <scope>X-RAY CRYSTALLOGRAPHY (2.0 ANGSTROMS) OF 20-435</scope>
    <scope>IDENTIFICATION BY MASS SPECTROMETRY</scope>
    <scope>GLYCOSYLATION AT ASN-99; ASN-216 AND ASN-350</scope>
    <scope>DISULFIDE BONDS</scope>
</reference>
<reference key="10">
    <citation type="journal article" date="1999" name="Proc. Natl. Acad. Sci. U.S.A.">
        <title>Mutations in HYAL1, a member of a tandemly distributed multigene family encoding disparate hyaluronidase activities, cause a newly described lysosomal disorder, mucopolysaccharidosis IX.</title>
        <authorList>
            <person name="Triggs-Raine B."/>
            <person name="Salo T.J."/>
            <person name="Zhang H."/>
            <person name="Wicklow B.A."/>
            <person name="Natowicz M.R."/>
        </authorList>
    </citation>
    <scope>VARIANT MPS9 LYS-268</scope>
    <scope>TISSUE SPECIFICITY</scope>
</reference>
<keyword id="KW-0002">3D-structure</keyword>
<keyword id="KW-0025">Alternative splicing</keyword>
<keyword id="KW-0903">Direct protein sequencing</keyword>
<keyword id="KW-0225">Disease variant</keyword>
<keyword id="KW-1015">Disulfide bond</keyword>
<keyword id="KW-0245">EGF-like domain</keyword>
<keyword id="KW-0325">Glycoprotein</keyword>
<keyword id="KW-0326">Glycosidase</keyword>
<keyword id="KW-0378">Hydrolase</keyword>
<keyword id="KW-0458">Lysosome</keyword>
<keyword id="KW-0510">Mucopolysaccharidosis</keyword>
<keyword id="KW-1267">Proteomics identification</keyword>
<keyword id="KW-1185">Reference proteome</keyword>
<keyword id="KW-0964">Secreted</keyword>
<keyword id="KW-0732">Signal</keyword>
<proteinExistence type="evidence at protein level"/>
<protein>
    <recommendedName>
        <fullName>Hyaluronidase-1</fullName>
        <shortName>Hyal-1</shortName>
        <ecNumber>3.2.1.35</ecNumber>
    </recommendedName>
    <alternativeName>
        <fullName>Hyaluronoglucosaminidase-1</fullName>
    </alternativeName>
    <alternativeName>
        <fullName>Lung carcinoma protein 1</fullName>
        <shortName>LuCa-1</shortName>
    </alternativeName>
</protein>
<accession>Q12794</accession>
<accession>Q6FH23</accession>
<accession>Q6PIZ6</accession>
<accession>Q7KYU2</accession>
<accession>Q7LE34</accession>
<accession>Q8NFK5</accession>
<accession>Q8NFK6</accession>
<accession>Q8NFK7</accession>
<accession>Q8NFK8</accession>
<accession>Q8NFK9</accession>
<accession>Q93013</accession>
<accession>Q9UKD5</accession>
<accession>Q9UNI8</accession>
<gene>
    <name type="primary">HYAL1</name>
    <name type="synonym">LUCA1</name>
</gene>